<feature type="signal peptide" evidence="2">
    <location>
        <begin position="1"/>
        <end position="20"/>
    </location>
</feature>
<feature type="chain" id="PRO_0000408966" description="Superoxide dismutase [Cu-Zn] 1">
    <location>
        <begin position="21"/>
        <end position="177"/>
    </location>
</feature>
<feature type="binding site" evidence="1">
    <location>
        <position position="69"/>
    </location>
    <ligand>
        <name>Cu cation</name>
        <dbReference type="ChEBI" id="CHEBI:23378"/>
        <note>catalytic</note>
    </ligand>
</feature>
<feature type="binding site" evidence="1">
    <location>
        <position position="71"/>
    </location>
    <ligand>
        <name>Cu cation</name>
        <dbReference type="ChEBI" id="CHEBI:23378"/>
        <note>catalytic</note>
    </ligand>
</feature>
<feature type="binding site" evidence="1">
    <location>
        <position position="94"/>
    </location>
    <ligand>
        <name>Cu cation</name>
        <dbReference type="ChEBI" id="CHEBI:23378"/>
        <note>catalytic</note>
    </ligand>
</feature>
<feature type="binding site" evidence="1">
    <location>
        <position position="94"/>
    </location>
    <ligand>
        <name>Zn(2+)</name>
        <dbReference type="ChEBI" id="CHEBI:29105"/>
        <note>structural</note>
    </ligand>
</feature>
<feature type="binding site" evidence="1">
    <location>
        <position position="103"/>
    </location>
    <ligand>
        <name>Zn(2+)</name>
        <dbReference type="ChEBI" id="CHEBI:29105"/>
        <note>structural</note>
    </ligand>
</feature>
<feature type="binding site" evidence="1">
    <location>
        <position position="112"/>
    </location>
    <ligand>
        <name>Zn(2+)</name>
        <dbReference type="ChEBI" id="CHEBI:29105"/>
        <note>structural</note>
    </ligand>
</feature>
<feature type="binding site" evidence="1">
    <location>
        <position position="115"/>
    </location>
    <ligand>
        <name>Zn(2+)</name>
        <dbReference type="ChEBI" id="CHEBI:29105"/>
        <note>structural</note>
    </ligand>
</feature>
<feature type="binding site" evidence="1">
    <location>
        <position position="150"/>
    </location>
    <ligand>
        <name>Cu cation</name>
        <dbReference type="ChEBI" id="CHEBI:23378"/>
        <note>catalytic</note>
    </ligand>
</feature>
<feature type="disulfide bond" evidence="1">
    <location>
        <begin position="76"/>
        <end position="172"/>
    </location>
</feature>
<feature type="sequence conflict" description="In Ref. 3; CAA63988." evidence="3" ref="3">
    <original>M</original>
    <variation>T</variation>
    <location>
        <position position="148"/>
    </location>
</feature>
<feature type="strand" evidence="4">
    <location>
        <begin position="23"/>
        <end position="32"/>
    </location>
</feature>
<feature type="strand" evidence="4">
    <location>
        <begin position="35"/>
        <end position="48"/>
    </location>
</feature>
<feature type="strand" evidence="4">
    <location>
        <begin position="51"/>
        <end position="58"/>
    </location>
</feature>
<feature type="strand" evidence="4">
    <location>
        <begin position="63"/>
        <end position="66"/>
    </location>
</feature>
<feature type="strand" evidence="4">
    <location>
        <begin position="68"/>
        <end position="74"/>
    </location>
</feature>
<feature type="strand" evidence="4">
    <location>
        <begin position="79"/>
        <end position="81"/>
    </location>
</feature>
<feature type="strand" evidence="4">
    <location>
        <begin position="84"/>
        <end position="86"/>
    </location>
</feature>
<feature type="helix" evidence="4">
    <location>
        <begin position="89"/>
        <end position="91"/>
    </location>
</feature>
<feature type="strand" evidence="4">
    <location>
        <begin position="119"/>
        <end position="121"/>
    </location>
</feature>
<feature type="strand" evidence="4">
    <location>
        <begin position="131"/>
        <end position="133"/>
    </location>
</feature>
<feature type="helix" evidence="4">
    <location>
        <begin position="139"/>
        <end position="142"/>
    </location>
</feature>
<feature type="strand" evidence="4">
    <location>
        <begin position="145"/>
        <end position="152"/>
    </location>
</feature>
<feature type="strand" evidence="4">
    <location>
        <begin position="156"/>
        <end position="161"/>
    </location>
</feature>
<feature type="helix" evidence="4">
    <location>
        <begin position="162"/>
        <end position="165"/>
    </location>
</feature>
<feature type="strand" evidence="4">
    <location>
        <begin position="168"/>
        <end position="175"/>
    </location>
</feature>
<protein>
    <recommendedName>
        <fullName>Superoxide dismutase [Cu-Zn] 1</fullName>
        <ecNumber>1.15.1.1</ecNumber>
    </recommendedName>
    <alternativeName>
        <fullName>sodCI</fullName>
    </alternativeName>
</protein>
<reference key="1">
    <citation type="journal article" date="1997" name="Mol. Microbiol.">
        <title>Bacterial copper- and zinc-cofactored superoxide dismutase contributes to the pathogenesis of systemic salmonellosis.</title>
        <authorList>
            <person name="Farrant J.L."/>
            <person name="Sansone A."/>
            <person name="Canvin J.R."/>
            <person name="Pallen M.J."/>
            <person name="Langford P.R."/>
            <person name="Wallis T.S."/>
            <person name="Dougan G."/>
            <person name="Kroll J.S."/>
        </authorList>
    </citation>
    <scope>NUCLEOTIDE SEQUENCE [GENOMIC DNA]</scope>
    <source>
        <strain>4/74</strain>
    </source>
</reference>
<reference key="2">
    <citation type="journal article" date="2011" name="J. Bacteriol.">
        <title>Genome sequences of Salmonella enterica serovar typhimurium, Choleraesuis, Dublin, and Gallinarum strains of well- defined virulence in food-producing animals.</title>
        <authorList>
            <person name="Richardson E.J."/>
            <person name="Limaye B."/>
            <person name="Inamdar H."/>
            <person name="Datta A."/>
            <person name="Manjari K.S."/>
            <person name="Pullinger G.D."/>
            <person name="Thomson N.R."/>
            <person name="Joshi R.R."/>
            <person name="Watson M."/>
            <person name="Stevens M.P."/>
        </authorList>
    </citation>
    <scope>NUCLEOTIDE SEQUENCE [LARGE SCALE GENOMIC DNA]</scope>
    <source>
        <strain>4/74</strain>
    </source>
</reference>
<reference key="3">
    <citation type="journal article" date="1996" name="FEMS Microbiol. Lett.">
        <title>Identification of sodC encoding periplasmic [Cu,Zn]-superoxide dismutase in Salmonella.</title>
        <authorList>
            <person name="Canvin J."/>
            <person name="Langford P.R."/>
            <person name="Wilks K.E."/>
            <person name="Kroll J.S."/>
        </authorList>
    </citation>
    <scope>NUCLEOTIDE SEQUENCE [GENOMIC DNA] OF 77-163</scope>
    <source>
        <strain>4/74</strain>
    </source>
</reference>
<keyword id="KW-0002">3D-structure</keyword>
<keyword id="KW-0049">Antioxidant</keyword>
<keyword id="KW-0186">Copper</keyword>
<keyword id="KW-1015">Disulfide bond</keyword>
<keyword id="KW-0479">Metal-binding</keyword>
<keyword id="KW-0560">Oxidoreductase</keyword>
<keyword id="KW-0574">Periplasm</keyword>
<keyword id="KW-0732">Signal</keyword>
<keyword id="KW-0862">Zinc</keyword>
<evidence type="ECO:0000250" key="1"/>
<evidence type="ECO:0000255" key="2"/>
<evidence type="ECO:0000305" key="3"/>
<evidence type="ECO:0007829" key="4">
    <source>
        <dbReference type="PDB" id="6D52"/>
    </source>
</evidence>
<comment type="function">
    <text>Destroys radicals which are normally produced within the cells and which are toxic to biological systems.</text>
</comment>
<comment type="catalytic activity">
    <reaction>
        <text>2 superoxide + 2 H(+) = H2O2 + O2</text>
        <dbReference type="Rhea" id="RHEA:20696"/>
        <dbReference type="ChEBI" id="CHEBI:15378"/>
        <dbReference type="ChEBI" id="CHEBI:15379"/>
        <dbReference type="ChEBI" id="CHEBI:16240"/>
        <dbReference type="ChEBI" id="CHEBI:18421"/>
        <dbReference type="EC" id="1.15.1.1"/>
    </reaction>
</comment>
<comment type="cofactor">
    <cofactor>
        <name>Cu cation</name>
        <dbReference type="ChEBI" id="CHEBI:23378"/>
    </cofactor>
    <text>Binds 1 copper ion per subunit.</text>
</comment>
<comment type="cofactor">
    <cofactor>
        <name>Zn(2+)</name>
        <dbReference type="ChEBI" id="CHEBI:29105"/>
    </cofactor>
    <text>Binds 1 zinc ion per subunit.</text>
</comment>
<comment type="subunit">
    <text evidence="1">Monomer.</text>
</comment>
<comment type="subcellular location">
    <subcellularLocation>
        <location>Periplasm</location>
    </subcellularLocation>
</comment>
<comment type="miscellaneous">
    <text>Encoded by a cryptic bacteriophage.</text>
</comment>
<comment type="similarity">
    <text evidence="3">Belongs to the Cu-Zn superoxide dismutase family.</text>
</comment>
<gene>
    <name type="primary">sodC1</name>
    <name type="synonym">sodC</name>
    <name type="ordered locus">STM474_1035</name>
</gene>
<organism>
    <name type="scientific">Salmonella typhimurium (strain 4/74)</name>
    <dbReference type="NCBI Taxonomy" id="909946"/>
    <lineage>
        <taxon>Bacteria</taxon>
        <taxon>Pseudomonadati</taxon>
        <taxon>Pseudomonadota</taxon>
        <taxon>Gammaproteobacteria</taxon>
        <taxon>Enterobacterales</taxon>
        <taxon>Enterobacteriaceae</taxon>
        <taxon>Salmonella</taxon>
    </lineage>
</organism>
<accession>E8XDJ8</accession>
<accession>O33803</accession>
<accession>O50545</accession>
<accession>P53636</accession>
<dbReference type="EC" id="1.15.1.1"/>
<dbReference type="EMBL" id="Y13121">
    <property type="protein sequence ID" value="CAA73588.1"/>
    <property type="molecule type" value="Genomic_DNA"/>
</dbReference>
<dbReference type="EMBL" id="CP002487">
    <property type="protein sequence ID" value="ADX16741.1"/>
    <property type="molecule type" value="Genomic_DNA"/>
</dbReference>
<dbReference type="EMBL" id="X94327">
    <property type="protein sequence ID" value="CAA63988.1"/>
    <property type="molecule type" value="Genomic_DNA"/>
</dbReference>
<dbReference type="RefSeq" id="WP_000877926.1">
    <property type="nucleotide sequence ID" value="NC_016857.1"/>
</dbReference>
<dbReference type="PDB" id="6D52">
    <property type="method" value="X-ray"/>
    <property type="resolution" value="1.60 A"/>
    <property type="chains" value="A/B/C/D=21-177"/>
</dbReference>
<dbReference type="PDBsum" id="6D52"/>
<dbReference type="SMR" id="E8XDJ8"/>
<dbReference type="KEGG" id="seb:STM474_1035"/>
<dbReference type="PATRIC" id="fig|909946.3.peg.1066"/>
<dbReference type="HOGENOM" id="CLU_056632_7_1_6"/>
<dbReference type="Proteomes" id="UP000008978">
    <property type="component" value="Chromosome"/>
</dbReference>
<dbReference type="GO" id="GO:0042597">
    <property type="term" value="C:periplasmic space"/>
    <property type="evidence" value="ECO:0007669"/>
    <property type="project" value="UniProtKB-SubCell"/>
</dbReference>
<dbReference type="GO" id="GO:0005507">
    <property type="term" value="F:copper ion binding"/>
    <property type="evidence" value="ECO:0007669"/>
    <property type="project" value="InterPro"/>
</dbReference>
<dbReference type="GO" id="GO:0004784">
    <property type="term" value="F:superoxide dismutase activity"/>
    <property type="evidence" value="ECO:0007669"/>
    <property type="project" value="UniProtKB-EC"/>
</dbReference>
<dbReference type="CDD" id="cd00305">
    <property type="entry name" value="Cu-Zn_Superoxide_Dismutase"/>
    <property type="match status" value="1"/>
</dbReference>
<dbReference type="FunFam" id="2.60.40.200:FF:000002">
    <property type="entry name" value="Superoxide dismutase [Cu-Zn]"/>
    <property type="match status" value="1"/>
</dbReference>
<dbReference type="Gene3D" id="2.60.40.200">
    <property type="entry name" value="Superoxide dismutase, copper/zinc binding domain"/>
    <property type="match status" value="1"/>
</dbReference>
<dbReference type="InterPro" id="IPR036423">
    <property type="entry name" value="SOD-like_Cu/Zn_dom_sf"/>
</dbReference>
<dbReference type="InterPro" id="IPR024134">
    <property type="entry name" value="SOD_Cu/Zn_/chaperone"/>
</dbReference>
<dbReference type="InterPro" id="IPR018152">
    <property type="entry name" value="SOD_Cu/Zn_BS"/>
</dbReference>
<dbReference type="InterPro" id="IPR001424">
    <property type="entry name" value="SOD_Cu_Zn_dom"/>
</dbReference>
<dbReference type="NCBIfam" id="NF007628">
    <property type="entry name" value="PRK10290.1"/>
    <property type="match status" value="1"/>
</dbReference>
<dbReference type="PANTHER" id="PTHR10003">
    <property type="entry name" value="SUPEROXIDE DISMUTASE CU-ZN -RELATED"/>
    <property type="match status" value="1"/>
</dbReference>
<dbReference type="Pfam" id="PF00080">
    <property type="entry name" value="Sod_Cu"/>
    <property type="match status" value="1"/>
</dbReference>
<dbReference type="SUPFAM" id="SSF49329">
    <property type="entry name" value="Cu,Zn superoxide dismutase-like"/>
    <property type="match status" value="1"/>
</dbReference>
<dbReference type="PROSITE" id="PS00332">
    <property type="entry name" value="SOD_CU_ZN_2"/>
    <property type="match status" value="1"/>
</dbReference>
<name>SODC1_SALT4</name>
<proteinExistence type="evidence at protein level"/>
<sequence>MKYTILSLVAGALISCSAMAENTLTVKMNDALSSGTGENIGEITVSETPYGLLFTPHLNGLTPGIHGFHVHTNPSCMPGMKDGKEVPALMAGGHLDPEKTGKHLGPYNDKGHLGDLPGLVVNADGTATYPLLAPRLKSLSELKGHSLMIHKGGDNYSDKPAPLGGGGARFACGVIEK</sequence>